<accession>A1USL7</accession>
<organism>
    <name type="scientific">Bartonella bacilliformis (strain ATCC 35685 / KC583 / Herrer 020/F12,63)</name>
    <dbReference type="NCBI Taxonomy" id="360095"/>
    <lineage>
        <taxon>Bacteria</taxon>
        <taxon>Pseudomonadati</taxon>
        <taxon>Pseudomonadota</taxon>
        <taxon>Alphaproteobacteria</taxon>
        <taxon>Hyphomicrobiales</taxon>
        <taxon>Bartonellaceae</taxon>
        <taxon>Bartonella</taxon>
    </lineage>
</organism>
<reference key="1">
    <citation type="submission" date="2006-12" db="EMBL/GenBank/DDBJ databases">
        <authorList>
            <person name="Hendrix L."/>
            <person name="Mohamoud Y."/>
            <person name="Radune D."/>
            <person name="Shvartsbeyn A."/>
            <person name="Daugherty S."/>
            <person name="Dodson R."/>
            <person name="Durkin A.S."/>
            <person name="Harkins D."/>
            <person name="Huot H."/>
            <person name="Kothari S.P."/>
            <person name="Madupu R."/>
            <person name="Li J."/>
            <person name="Nelson W.C."/>
            <person name="Shrivastava S."/>
            <person name="Giglio M.G."/>
            <person name="Haft D."/>
            <person name="Selengut J."/>
            <person name="Fraser-Ligget C."/>
            <person name="Seshadri R."/>
        </authorList>
    </citation>
    <scope>NUCLEOTIDE SEQUENCE [LARGE SCALE GENOMIC DNA]</scope>
    <source>
        <strain>ATCC 35685 / KC583 / Herrer 020/F12,63</strain>
    </source>
</reference>
<feature type="chain" id="PRO_0000309872" description="Large ribosomal subunit protein uL2">
    <location>
        <begin position="1"/>
        <end position="277"/>
    </location>
</feature>
<feature type="region of interest" description="Disordered" evidence="2">
    <location>
        <begin position="222"/>
        <end position="277"/>
    </location>
</feature>
<protein>
    <recommendedName>
        <fullName evidence="1">Large ribosomal subunit protein uL2</fullName>
    </recommendedName>
    <alternativeName>
        <fullName evidence="3">50S ribosomal protein L2</fullName>
    </alternativeName>
</protein>
<proteinExistence type="inferred from homology"/>
<name>RL2_BARBK</name>
<evidence type="ECO:0000255" key="1">
    <source>
        <dbReference type="HAMAP-Rule" id="MF_01320"/>
    </source>
</evidence>
<evidence type="ECO:0000256" key="2">
    <source>
        <dbReference type="SAM" id="MobiDB-lite"/>
    </source>
</evidence>
<evidence type="ECO:0000305" key="3"/>
<gene>
    <name evidence="1" type="primary">rplB1</name>
    <name type="ordered locus">BARBAKC583_0669</name>
</gene>
<gene>
    <name evidence="1" type="primary">rplB2</name>
    <name type="ordered locus">BARBAKC583_0701</name>
</gene>
<comment type="function">
    <text evidence="1">One of the primary rRNA binding proteins. Required for association of the 30S and 50S subunits to form the 70S ribosome, for tRNA binding and peptide bond formation. It has been suggested to have peptidyltransferase activity; this is somewhat controversial. Makes several contacts with the 16S rRNA in the 70S ribosome.</text>
</comment>
<comment type="subunit">
    <text evidence="1">Part of the 50S ribosomal subunit. Forms a bridge to the 30S subunit in the 70S ribosome.</text>
</comment>
<comment type="similarity">
    <text evidence="1">Belongs to the universal ribosomal protein uL2 family.</text>
</comment>
<sequence length="277" mass="30246">MALKHFNPTTSGQRQLVIVDRSGLYKGKPVKTLTEGLLSKGGRNNSGKITARFQGGRHKRSYRFIDFKRLKLDVSAKVERLEYDPNRTAFIALIRYEDGQLSYILAPQRLDVGDTVVAGLSVDVKPGNAMPLGNMPVGAIVHNVEMKPGKGGQIARSAGAYAQLVGRDQGMAILRLNSGEQRLVSSNCFATVGAVSNPDHGNINDGKAGRSRWRGKRPHVRGVAMNPVDHPHGGGEGRTSGGRHPVSPWGKPTKGKRTRSNKATDKFIMRSRHQRKK</sequence>
<dbReference type="EMBL" id="CP000524">
    <property type="protein sequence ID" value="ABM44750.1"/>
    <property type="molecule type" value="Genomic_DNA"/>
</dbReference>
<dbReference type="EMBL" id="CP000524">
    <property type="protein sequence ID" value="ABM45337.1"/>
    <property type="molecule type" value="Genomic_DNA"/>
</dbReference>
<dbReference type="SMR" id="A1USL7"/>
<dbReference type="STRING" id="360095.BARBAKC583_0669"/>
<dbReference type="GeneID" id="4684739"/>
<dbReference type="KEGG" id="bbk:BARBAKC583_0669"/>
<dbReference type="KEGG" id="bbk:BARBAKC583_0701"/>
<dbReference type="PATRIC" id="fig|360095.6.peg.680"/>
<dbReference type="eggNOG" id="COG0090">
    <property type="taxonomic scope" value="Bacteria"/>
</dbReference>
<dbReference type="HOGENOM" id="CLU_036235_2_1_5"/>
<dbReference type="OrthoDB" id="9778722at2"/>
<dbReference type="Proteomes" id="UP000000643">
    <property type="component" value="Chromosome"/>
</dbReference>
<dbReference type="GO" id="GO:0015934">
    <property type="term" value="C:large ribosomal subunit"/>
    <property type="evidence" value="ECO:0007669"/>
    <property type="project" value="InterPro"/>
</dbReference>
<dbReference type="GO" id="GO:0019843">
    <property type="term" value="F:rRNA binding"/>
    <property type="evidence" value="ECO:0007669"/>
    <property type="project" value="UniProtKB-UniRule"/>
</dbReference>
<dbReference type="GO" id="GO:0003735">
    <property type="term" value="F:structural constituent of ribosome"/>
    <property type="evidence" value="ECO:0007669"/>
    <property type="project" value="InterPro"/>
</dbReference>
<dbReference type="GO" id="GO:0016740">
    <property type="term" value="F:transferase activity"/>
    <property type="evidence" value="ECO:0007669"/>
    <property type="project" value="InterPro"/>
</dbReference>
<dbReference type="GO" id="GO:0002181">
    <property type="term" value="P:cytoplasmic translation"/>
    <property type="evidence" value="ECO:0007669"/>
    <property type="project" value="TreeGrafter"/>
</dbReference>
<dbReference type="FunFam" id="2.30.30.30:FF:000001">
    <property type="entry name" value="50S ribosomal protein L2"/>
    <property type="match status" value="1"/>
</dbReference>
<dbReference type="FunFam" id="4.10.950.10:FF:000001">
    <property type="entry name" value="50S ribosomal protein L2"/>
    <property type="match status" value="1"/>
</dbReference>
<dbReference type="Gene3D" id="2.30.30.30">
    <property type="match status" value="1"/>
</dbReference>
<dbReference type="Gene3D" id="2.40.50.140">
    <property type="entry name" value="Nucleic acid-binding proteins"/>
    <property type="match status" value="1"/>
</dbReference>
<dbReference type="Gene3D" id="4.10.950.10">
    <property type="entry name" value="Ribosomal protein L2, domain 3"/>
    <property type="match status" value="1"/>
</dbReference>
<dbReference type="HAMAP" id="MF_01320_B">
    <property type="entry name" value="Ribosomal_uL2_B"/>
    <property type="match status" value="1"/>
</dbReference>
<dbReference type="InterPro" id="IPR012340">
    <property type="entry name" value="NA-bd_OB-fold"/>
</dbReference>
<dbReference type="InterPro" id="IPR014722">
    <property type="entry name" value="Rib_uL2_dom2"/>
</dbReference>
<dbReference type="InterPro" id="IPR002171">
    <property type="entry name" value="Ribosomal_uL2"/>
</dbReference>
<dbReference type="InterPro" id="IPR005880">
    <property type="entry name" value="Ribosomal_uL2_bac/org-type"/>
</dbReference>
<dbReference type="InterPro" id="IPR022669">
    <property type="entry name" value="Ribosomal_uL2_C"/>
</dbReference>
<dbReference type="InterPro" id="IPR022671">
    <property type="entry name" value="Ribosomal_uL2_CS"/>
</dbReference>
<dbReference type="InterPro" id="IPR014726">
    <property type="entry name" value="Ribosomal_uL2_dom3"/>
</dbReference>
<dbReference type="InterPro" id="IPR022666">
    <property type="entry name" value="Ribosomal_uL2_RNA-bd_dom"/>
</dbReference>
<dbReference type="InterPro" id="IPR008991">
    <property type="entry name" value="Translation_prot_SH3-like_sf"/>
</dbReference>
<dbReference type="NCBIfam" id="TIGR01171">
    <property type="entry name" value="rplB_bact"/>
    <property type="match status" value="1"/>
</dbReference>
<dbReference type="PANTHER" id="PTHR13691:SF5">
    <property type="entry name" value="LARGE RIBOSOMAL SUBUNIT PROTEIN UL2M"/>
    <property type="match status" value="1"/>
</dbReference>
<dbReference type="PANTHER" id="PTHR13691">
    <property type="entry name" value="RIBOSOMAL PROTEIN L2"/>
    <property type="match status" value="1"/>
</dbReference>
<dbReference type="Pfam" id="PF00181">
    <property type="entry name" value="Ribosomal_L2"/>
    <property type="match status" value="1"/>
</dbReference>
<dbReference type="Pfam" id="PF03947">
    <property type="entry name" value="Ribosomal_L2_C"/>
    <property type="match status" value="1"/>
</dbReference>
<dbReference type="PIRSF" id="PIRSF002158">
    <property type="entry name" value="Ribosomal_L2"/>
    <property type="match status" value="1"/>
</dbReference>
<dbReference type="SMART" id="SM01383">
    <property type="entry name" value="Ribosomal_L2"/>
    <property type="match status" value="1"/>
</dbReference>
<dbReference type="SMART" id="SM01382">
    <property type="entry name" value="Ribosomal_L2_C"/>
    <property type="match status" value="1"/>
</dbReference>
<dbReference type="SUPFAM" id="SSF50249">
    <property type="entry name" value="Nucleic acid-binding proteins"/>
    <property type="match status" value="1"/>
</dbReference>
<dbReference type="SUPFAM" id="SSF50104">
    <property type="entry name" value="Translation proteins SH3-like domain"/>
    <property type="match status" value="1"/>
</dbReference>
<dbReference type="PROSITE" id="PS00467">
    <property type="entry name" value="RIBOSOMAL_L2"/>
    <property type="match status" value="1"/>
</dbReference>
<keyword id="KW-0687">Ribonucleoprotein</keyword>
<keyword id="KW-0689">Ribosomal protein</keyword>
<keyword id="KW-0694">RNA-binding</keyword>
<keyword id="KW-0699">rRNA-binding</keyword>